<gene>
    <name evidence="1" type="primary">gltX</name>
    <name type="ordered locus">HS_0456</name>
</gene>
<organism>
    <name type="scientific">Histophilus somni (strain 129Pt)</name>
    <name type="common">Haemophilus somnus</name>
    <dbReference type="NCBI Taxonomy" id="205914"/>
    <lineage>
        <taxon>Bacteria</taxon>
        <taxon>Pseudomonadati</taxon>
        <taxon>Pseudomonadota</taxon>
        <taxon>Gammaproteobacteria</taxon>
        <taxon>Pasteurellales</taxon>
        <taxon>Pasteurellaceae</taxon>
        <taxon>Histophilus</taxon>
    </lineage>
</organism>
<proteinExistence type="inferred from homology"/>
<keyword id="KW-0030">Aminoacyl-tRNA synthetase</keyword>
<keyword id="KW-0067">ATP-binding</keyword>
<keyword id="KW-0963">Cytoplasm</keyword>
<keyword id="KW-0436">Ligase</keyword>
<keyword id="KW-0479">Metal-binding</keyword>
<keyword id="KW-0547">Nucleotide-binding</keyword>
<keyword id="KW-0648">Protein biosynthesis</keyword>
<keyword id="KW-0862">Zinc</keyword>
<evidence type="ECO:0000255" key="1">
    <source>
        <dbReference type="HAMAP-Rule" id="MF_00022"/>
    </source>
</evidence>
<feature type="chain" id="PRO_1000001909" description="Glutamate--tRNA ligase">
    <location>
        <begin position="1"/>
        <end position="480"/>
    </location>
</feature>
<feature type="short sequence motif" description="'HIGH' region" evidence="1">
    <location>
        <begin position="21"/>
        <end position="31"/>
    </location>
</feature>
<feature type="short sequence motif" description="'KMSKS' region" evidence="1">
    <location>
        <begin position="248"/>
        <end position="252"/>
    </location>
</feature>
<feature type="binding site" evidence="1">
    <location>
        <position position="110"/>
    </location>
    <ligand>
        <name>Zn(2+)</name>
        <dbReference type="ChEBI" id="CHEBI:29105"/>
    </ligand>
</feature>
<feature type="binding site" evidence="1">
    <location>
        <position position="112"/>
    </location>
    <ligand>
        <name>Zn(2+)</name>
        <dbReference type="ChEBI" id="CHEBI:29105"/>
    </ligand>
</feature>
<feature type="binding site" evidence="1">
    <location>
        <position position="137"/>
    </location>
    <ligand>
        <name>Zn(2+)</name>
        <dbReference type="ChEBI" id="CHEBI:29105"/>
    </ligand>
</feature>
<feature type="binding site" evidence="1">
    <location>
        <position position="139"/>
    </location>
    <ligand>
        <name>Zn(2+)</name>
        <dbReference type="ChEBI" id="CHEBI:29105"/>
    </ligand>
</feature>
<feature type="binding site" evidence="1">
    <location>
        <position position="251"/>
    </location>
    <ligand>
        <name>ATP</name>
        <dbReference type="ChEBI" id="CHEBI:30616"/>
    </ligand>
</feature>
<sequence length="480" mass="54979">MKLEPLFNLDPNTKVRTRFAPSPTGYLHVGGARTALYSWLYAKHNQGEFVLRIEDTDLERSTPEATAAILEGMEWLNLAWEHGPYFQTKRFERYNQVIDQMIEQGLAYRCYCTKERLEDLRHSQEQNKQKPRYDRYCLHQSEYPVDAPHVVRFKNPTEGTVVFDDAVRGRIEISNRELDDLIIRRTDGSPTYNFCVVVDDWDMGITHVVRGEDHINNTPRQINILKALGAPIPTYAHVSMINGDDGQKLSKRHGAVSVMQYRDEGYLPEALINYLVRLGWGHGDQEIFSREEMIALFDIHSVSKSASAFNTEKLQWLNQHYMRSLPVEQVATHLEWHMKKHGIDYSNGPNLAEIIPVLSERCKTLKELAISSRYFYQDVENYDEKAVAKNFKPEAIKPLAKLAEKLTALSDWTVENIHEVMSQTAQELDIGMGKVGMPFRLAVTGLGQSPSMDITAKLVGKDRTISRINNAIAFIHTQNV</sequence>
<reference key="1">
    <citation type="journal article" date="2007" name="J. Bacteriol.">
        <title>Complete genome sequence of Haemophilus somnus (Histophilus somni) strain 129Pt and comparison to Haemophilus ducreyi 35000HP and Haemophilus influenzae Rd.</title>
        <authorList>
            <person name="Challacombe J.F."/>
            <person name="Duncan A.J."/>
            <person name="Brettin T.S."/>
            <person name="Bruce D."/>
            <person name="Chertkov O."/>
            <person name="Detter J.C."/>
            <person name="Han C.S."/>
            <person name="Misra M."/>
            <person name="Richardson P."/>
            <person name="Tapia R."/>
            <person name="Thayer N."/>
            <person name="Xie G."/>
            <person name="Inzana T.J."/>
        </authorList>
    </citation>
    <scope>NUCLEOTIDE SEQUENCE [LARGE SCALE GENOMIC DNA]</scope>
    <source>
        <strain>129Pt</strain>
    </source>
</reference>
<comment type="function">
    <text evidence="1">Catalyzes the attachment of glutamate to tRNA(Glu) in a two-step reaction: glutamate is first activated by ATP to form Glu-AMP and then transferred to the acceptor end of tRNA(Glu).</text>
</comment>
<comment type="catalytic activity">
    <reaction evidence="1">
        <text>tRNA(Glu) + L-glutamate + ATP = L-glutamyl-tRNA(Glu) + AMP + diphosphate</text>
        <dbReference type="Rhea" id="RHEA:23540"/>
        <dbReference type="Rhea" id="RHEA-COMP:9663"/>
        <dbReference type="Rhea" id="RHEA-COMP:9680"/>
        <dbReference type="ChEBI" id="CHEBI:29985"/>
        <dbReference type="ChEBI" id="CHEBI:30616"/>
        <dbReference type="ChEBI" id="CHEBI:33019"/>
        <dbReference type="ChEBI" id="CHEBI:78442"/>
        <dbReference type="ChEBI" id="CHEBI:78520"/>
        <dbReference type="ChEBI" id="CHEBI:456215"/>
        <dbReference type="EC" id="6.1.1.17"/>
    </reaction>
</comment>
<comment type="cofactor">
    <cofactor evidence="1">
        <name>Zn(2+)</name>
        <dbReference type="ChEBI" id="CHEBI:29105"/>
    </cofactor>
    <text evidence="1">Binds 1 zinc ion per subunit.</text>
</comment>
<comment type="subunit">
    <text evidence="1">Monomer.</text>
</comment>
<comment type="subcellular location">
    <subcellularLocation>
        <location evidence="1">Cytoplasm</location>
    </subcellularLocation>
</comment>
<comment type="similarity">
    <text evidence="1">Belongs to the class-I aminoacyl-tRNA synthetase family. Glutamate--tRNA ligase type 1 subfamily.</text>
</comment>
<accession>Q0I297</accession>
<dbReference type="EC" id="6.1.1.17" evidence="1"/>
<dbReference type="EMBL" id="CP000436">
    <property type="protein sequence ID" value="ABI24733.1"/>
    <property type="molecule type" value="Genomic_DNA"/>
</dbReference>
<dbReference type="SMR" id="Q0I297"/>
<dbReference type="KEGG" id="hso:HS_0456"/>
<dbReference type="eggNOG" id="COG0008">
    <property type="taxonomic scope" value="Bacteria"/>
</dbReference>
<dbReference type="HOGENOM" id="CLU_015768_6_3_6"/>
<dbReference type="GO" id="GO:0005829">
    <property type="term" value="C:cytosol"/>
    <property type="evidence" value="ECO:0007669"/>
    <property type="project" value="TreeGrafter"/>
</dbReference>
<dbReference type="GO" id="GO:0005524">
    <property type="term" value="F:ATP binding"/>
    <property type="evidence" value="ECO:0007669"/>
    <property type="project" value="UniProtKB-UniRule"/>
</dbReference>
<dbReference type="GO" id="GO:0004818">
    <property type="term" value="F:glutamate-tRNA ligase activity"/>
    <property type="evidence" value="ECO:0007669"/>
    <property type="project" value="UniProtKB-UniRule"/>
</dbReference>
<dbReference type="GO" id="GO:0000049">
    <property type="term" value="F:tRNA binding"/>
    <property type="evidence" value="ECO:0007669"/>
    <property type="project" value="InterPro"/>
</dbReference>
<dbReference type="GO" id="GO:0008270">
    <property type="term" value="F:zinc ion binding"/>
    <property type="evidence" value="ECO:0007669"/>
    <property type="project" value="InterPro"/>
</dbReference>
<dbReference type="GO" id="GO:0006424">
    <property type="term" value="P:glutamyl-tRNA aminoacylation"/>
    <property type="evidence" value="ECO:0007669"/>
    <property type="project" value="UniProtKB-UniRule"/>
</dbReference>
<dbReference type="CDD" id="cd00808">
    <property type="entry name" value="GluRS_core"/>
    <property type="match status" value="1"/>
</dbReference>
<dbReference type="FunFam" id="3.40.50.620:FF:000007">
    <property type="entry name" value="Glutamate--tRNA ligase"/>
    <property type="match status" value="1"/>
</dbReference>
<dbReference type="Gene3D" id="1.10.10.350">
    <property type="match status" value="1"/>
</dbReference>
<dbReference type="Gene3D" id="3.40.50.620">
    <property type="entry name" value="HUPs"/>
    <property type="match status" value="1"/>
</dbReference>
<dbReference type="HAMAP" id="MF_00022">
    <property type="entry name" value="Glu_tRNA_synth_type1"/>
    <property type="match status" value="1"/>
</dbReference>
<dbReference type="InterPro" id="IPR045462">
    <property type="entry name" value="aa-tRNA-synth_I_cd-bd"/>
</dbReference>
<dbReference type="InterPro" id="IPR020751">
    <property type="entry name" value="aa-tRNA-synth_I_codon-bd_sub2"/>
</dbReference>
<dbReference type="InterPro" id="IPR001412">
    <property type="entry name" value="aa-tRNA-synth_I_CS"/>
</dbReference>
<dbReference type="InterPro" id="IPR008925">
    <property type="entry name" value="aa_tRNA-synth_I_cd-bd_sf"/>
</dbReference>
<dbReference type="InterPro" id="IPR004527">
    <property type="entry name" value="Glu-tRNA-ligase_bac/mito"/>
</dbReference>
<dbReference type="InterPro" id="IPR000924">
    <property type="entry name" value="Glu/Gln-tRNA-synth"/>
</dbReference>
<dbReference type="InterPro" id="IPR020058">
    <property type="entry name" value="Glu/Gln-tRNA-synth_Ib_cat-dom"/>
</dbReference>
<dbReference type="InterPro" id="IPR049940">
    <property type="entry name" value="GluQ/Sye"/>
</dbReference>
<dbReference type="InterPro" id="IPR033910">
    <property type="entry name" value="GluRS_core"/>
</dbReference>
<dbReference type="InterPro" id="IPR014729">
    <property type="entry name" value="Rossmann-like_a/b/a_fold"/>
</dbReference>
<dbReference type="NCBIfam" id="TIGR00464">
    <property type="entry name" value="gltX_bact"/>
    <property type="match status" value="1"/>
</dbReference>
<dbReference type="PANTHER" id="PTHR43311">
    <property type="entry name" value="GLUTAMATE--TRNA LIGASE"/>
    <property type="match status" value="1"/>
</dbReference>
<dbReference type="PANTHER" id="PTHR43311:SF2">
    <property type="entry name" value="GLUTAMATE--TRNA LIGASE, MITOCHONDRIAL-RELATED"/>
    <property type="match status" value="1"/>
</dbReference>
<dbReference type="Pfam" id="PF19269">
    <property type="entry name" value="Anticodon_2"/>
    <property type="match status" value="1"/>
</dbReference>
<dbReference type="Pfam" id="PF00749">
    <property type="entry name" value="tRNA-synt_1c"/>
    <property type="match status" value="1"/>
</dbReference>
<dbReference type="PRINTS" id="PR00987">
    <property type="entry name" value="TRNASYNTHGLU"/>
</dbReference>
<dbReference type="SUPFAM" id="SSF48163">
    <property type="entry name" value="An anticodon-binding domain of class I aminoacyl-tRNA synthetases"/>
    <property type="match status" value="1"/>
</dbReference>
<dbReference type="SUPFAM" id="SSF52374">
    <property type="entry name" value="Nucleotidylyl transferase"/>
    <property type="match status" value="1"/>
</dbReference>
<dbReference type="PROSITE" id="PS00178">
    <property type="entry name" value="AA_TRNA_LIGASE_I"/>
    <property type="match status" value="1"/>
</dbReference>
<name>SYE_HISS1</name>
<protein>
    <recommendedName>
        <fullName evidence="1">Glutamate--tRNA ligase</fullName>
        <ecNumber evidence="1">6.1.1.17</ecNumber>
    </recommendedName>
    <alternativeName>
        <fullName evidence="1">Glutamyl-tRNA synthetase</fullName>
        <shortName evidence="1">GluRS</shortName>
    </alternativeName>
</protein>